<evidence type="ECO:0000250" key="1"/>
<evidence type="ECO:0000250" key="2">
    <source>
        <dbReference type="UniProtKB" id="O09010"/>
    </source>
</evidence>
<evidence type="ECO:0000255" key="3"/>
<evidence type="ECO:0000256" key="4">
    <source>
        <dbReference type="SAM" id="MobiDB-lite"/>
    </source>
</evidence>
<evidence type="ECO:0000269" key="5">
    <source>
    </source>
</evidence>
<evidence type="ECO:0000305" key="6"/>
<name>LFNG_XENLA</name>
<reference key="1">
    <citation type="journal article" date="1996" name="Science">
        <title>The secreted product of Xenopus gene lunatic Fringe, a vertebrate signaling molecule.</title>
        <authorList>
            <person name="Wu J.Y."/>
            <person name="Wen L."/>
            <person name="Zhang W.-J."/>
            <person name="Rao Y."/>
        </authorList>
    </citation>
    <scope>NUCLEOTIDE SEQUENCE [MRNA]</scope>
    <scope>FUNCTION</scope>
    <scope>TISSUE SPECIFICITY</scope>
    <scope>DEVELOPMENTAL STAGE</scope>
</reference>
<dbReference type="EC" id="2.4.1.222" evidence="2"/>
<dbReference type="EMBL" id="U77640">
    <property type="protein sequence ID" value="AAB19225.1"/>
    <property type="molecule type" value="mRNA"/>
</dbReference>
<dbReference type="RefSeq" id="NP_001081471.1">
    <property type="nucleotide sequence ID" value="NM_001088002.1"/>
</dbReference>
<dbReference type="SMR" id="P79948"/>
<dbReference type="CAZy" id="GT31">
    <property type="family name" value="Glycosyltransferase Family 31"/>
</dbReference>
<dbReference type="GlyCosmos" id="P79948">
    <property type="glycosylation" value="1 site, No reported glycans"/>
</dbReference>
<dbReference type="GeneID" id="397855"/>
<dbReference type="KEGG" id="xla:397855"/>
<dbReference type="AGR" id="Xenbase:XB-GENE-17334134"/>
<dbReference type="CTD" id="397855"/>
<dbReference type="Xenbase" id="XB-GENE-17334134">
    <property type="gene designation" value="lfng.S"/>
</dbReference>
<dbReference type="OrthoDB" id="8959630at2759"/>
<dbReference type="Proteomes" id="UP000186698">
    <property type="component" value="Chromosome 9_10S"/>
</dbReference>
<dbReference type="Bgee" id="397855">
    <property type="expression patterns" value="Expressed in internal ear and 19 other cell types or tissues"/>
</dbReference>
<dbReference type="GO" id="GO:0000139">
    <property type="term" value="C:Golgi membrane"/>
    <property type="evidence" value="ECO:0007669"/>
    <property type="project" value="UniProtKB-SubCell"/>
</dbReference>
<dbReference type="GO" id="GO:0046872">
    <property type="term" value="F:metal ion binding"/>
    <property type="evidence" value="ECO:0007669"/>
    <property type="project" value="UniProtKB-KW"/>
</dbReference>
<dbReference type="GO" id="GO:0033829">
    <property type="term" value="F:O-fucosylpeptide 3-beta-N-acetylglucosaminyltransferase activity"/>
    <property type="evidence" value="ECO:0000318"/>
    <property type="project" value="GO_Central"/>
</dbReference>
<dbReference type="GO" id="GO:0007389">
    <property type="term" value="P:pattern specification process"/>
    <property type="evidence" value="ECO:0007669"/>
    <property type="project" value="InterPro"/>
</dbReference>
<dbReference type="GO" id="GO:0008593">
    <property type="term" value="P:regulation of Notch signaling pathway"/>
    <property type="evidence" value="ECO:0000250"/>
    <property type="project" value="UniProtKB"/>
</dbReference>
<dbReference type="FunFam" id="3.90.550.50:FF:000003">
    <property type="entry name" value="Beta-1,3-N-acetylglucosaminyltransferase"/>
    <property type="match status" value="1"/>
</dbReference>
<dbReference type="Gene3D" id="3.90.550.50">
    <property type="match status" value="1"/>
</dbReference>
<dbReference type="InterPro" id="IPR017374">
    <property type="entry name" value="Fringe"/>
</dbReference>
<dbReference type="InterPro" id="IPR003378">
    <property type="entry name" value="Fringe-like_glycosylTrfase"/>
</dbReference>
<dbReference type="PANTHER" id="PTHR10811">
    <property type="entry name" value="FRINGE-RELATED"/>
    <property type="match status" value="1"/>
</dbReference>
<dbReference type="Pfam" id="PF02434">
    <property type="entry name" value="Fringe"/>
    <property type="match status" value="1"/>
</dbReference>
<dbReference type="PIRSF" id="PIRSF038073">
    <property type="entry name" value="B-acetylgalactosaminyltfrase"/>
    <property type="match status" value="1"/>
</dbReference>
<gene>
    <name type="primary">lfng</name>
</gene>
<feature type="chain" id="PRO_0000219181" description="Beta-1,3-N-acetylglucosaminyltransferase lunatic fringe">
    <location>
        <begin position="1"/>
        <end position="375"/>
    </location>
</feature>
<feature type="topological domain" description="Cytoplasmic" evidence="3">
    <location>
        <begin position="1"/>
        <end position="8"/>
    </location>
</feature>
<feature type="transmembrane region" description="Helical; Signal-anchor for type II membrane protein" evidence="3">
    <location>
        <begin position="9"/>
        <end position="29"/>
    </location>
</feature>
<feature type="topological domain" description="Lumenal" evidence="3">
    <location>
        <begin position="30"/>
        <end position="375"/>
    </location>
</feature>
<feature type="region of interest" description="Disordered" evidence="4">
    <location>
        <begin position="53"/>
        <end position="73"/>
    </location>
</feature>
<feature type="active site" evidence="1">
    <location>
        <position position="286"/>
    </location>
</feature>
<feature type="binding site" evidence="1">
    <location>
        <position position="125"/>
    </location>
    <ligand>
        <name>substrate</name>
    </ligand>
</feature>
<feature type="binding site" evidence="1">
    <location>
        <position position="197"/>
    </location>
    <ligand>
        <name>substrate</name>
    </ligand>
</feature>
<feature type="binding site" evidence="1">
    <location>
        <position position="198"/>
    </location>
    <ligand>
        <name>Mn(2+)</name>
        <dbReference type="ChEBI" id="CHEBI:29035"/>
    </ligand>
</feature>
<feature type="binding site" evidence="1">
    <location>
        <position position="310"/>
    </location>
    <ligand>
        <name>Mn(2+)</name>
        <dbReference type="ChEBI" id="CHEBI:29035"/>
    </ligand>
</feature>
<feature type="site" description="Cleavage; by furin-like protease" evidence="3">
    <location>
        <begin position="87"/>
        <end position="88"/>
    </location>
</feature>
<feature type="glycosylation site" description="N-linked (GlcNAc...) asparagine" evidence="3">
    <location>
        <position position="163"/>
    </location>
</feature>
<feature type="disulfide bond" evidence="1">
    <location>
        <begin position="164"/>
        <end position="175"/>
    </location>
</feature>
<feature type="disulfide bond" evidence="1">
    <location>
        <begin position="193"/>
        <end position="256"/>
    </location>
</feature>
<feature type="disulfide bond" evidence="1">
    <location>
        <begin position="360"/>
        <end position="369"/>
    </location>
</feature>
<accession>P79948</accession>
<proteinExistence type="evidence at transcript level"/>
<protein>
    <recommendedName>
        <fullName evidence="6">Beta-1,3-N-acetylglucosaminyltransferase lunatic fringe</fullName>
        <ecNumber evidence="2">2.4.1.222</ecNumber>
    </recommendedName>
    <alternativeName>
        <fullName>O-fucosylpeptide 3-beta-N-acetylglucosaminyltransferase</fullName>
    </alternativeName>
</protein>
<organism>
    <name type="scientific">Xenopus laevis</name>
    <name type="common">African clawed frog</name>
    <dbReference type="NCBI Taxonomy" id="8355"/>
    <lineage>
        <taxon>Eukaryota</taxon>
        <taxon>Metazoa</taxon>
        <taxon>Chordata</taxon>
        <taxon>Craniata</taxon>
        <taxon>Vertebrata</taxon>
        <taxon>Euteleostomi</taxon>
        <taxon>Amphibia</taxon>
        <taxon>Batrachia</taxon>
        <taxon>Anura</taxon>
        <taxon>Pipoidea</taxon>
        <taxon>Pipidae</taxon>
        <taxon>Xenopodinae</taxon>
        <taxon>Xenopus</taxon>
        <taxon>Xenopus</taxon>
    </lineage>
</organism>
<comment type="function">
    <text evidence="2 5">Glycosyltransferase that initiates the elongation of O-linked fucose residues attached to EGF-like repeats in the extracellular domain of Notch molecules. Essential mediator of somite segmentation and patterning (By similarity). May be involved in mesoderm development (PubMed:8662522).</text>
</comment>
<comment type="catalytic activity">
    <reaction evidence="2">
        <text>3-O-(alpha-L-fucosyl)-L-threonyl-[EGF-like domain protein] + UDP-N-acetyl-alpha-D-glucosamine = 3-O-(N-acetyl-beta-D-glucosaminyl-(1-&gt;3)-alpha-L-fucosyl)-L-threonyl-[EGF-like domain protein] + UDP + H(+)</text>
        <dbReference type="Rhea" id="RHEA:70531"/>
        <dbReference type="Rhea" id="RHEA-COMP:17922"/>
        <dbReference type="Rhea" id="RHEA-COMP:17923"/>
        <dbReference type="ChEBI" id="CHEBI:15378"/>
        <dbReference type="ChEBI" id="CHEBI:57705"/>
        <dbReference type="ChEBI" id="CHEBI:58223"/>
        <dbReference type="ChEBI" id="CHEBI:189631"/>
        <dbReference type="ChEBI" id="CHEBI:189634"/>
        <dbReference type="EC" id="2.4.1.222"/>
    </reaction>
</comment>
<comment type="catalytic activity">
    <reaction evidence="2">
        <text>3-O-(alpha-L-fucosyl)-L-seryl-[EGF-like domain protein] + UDP-N-acetyl-alpha-D-glucosamine = 3-O-(N-acetyl-beta-D-glucosaminyl-(1-&gt;3)-alpha-L-fucosyl)-L-seryl-[EGF-like domain protein] + UDP + H(+)</text>
        <dbReference type="Rhea" id="RHEA:70511"/>
        <dbReference type="Rhea" id="RHEA-COMP:17919"/>
        <dbReference type="Rhea" id="RHEA-COMP:17920"/>
        <dbReference type="ChEBI" id="CHEBI:15378"/>
        <dbReference type="ChEBI" id="CHEBI:57705"/>
        <dbReference type="ChEBI" id="CHEBI:58223"/>
        <dbReference type="ChEBI" id="CHEBI:189632"/>
        <dbReference type="ChEBI" id="CHEBI:189633"/>
        <dbReference type="EC" id="2.4.1.222"/>
    </reaction>
</comment>
<comment type="cofactor">
    <cofactor evidence="2">
        <name>Mn(2+)</name>
        <dbReference type="ChEBI" id="CHEBI:29035"/>
    </cofactor>
    <cofactor evidence="2">
        <name>Co(2+)</name>
        <dbReference type="ChEBI" id="CHEBI:48828"/>
    </cofactor>
    <text evidence="2">Manganese is the most effective. Can also use cobalt with lower efficiency. Has some activity with magnesium and calcium, but not zinc.</text>
</comment>
<comment type="subcellular location">
    <subcellularLocation>
        <location evidence="1">Golgi apparatus membrane</location>
        <topology evidence="1">Single-pass type II membrane protein</topology>
    </subcellularLocation>
</comment>
<comment type="tissue specificity">
    <text evidence="5">Detected in the neural tube, the eye and the otic vesicle, expression coincides with the region that produces the medial, intermediate and lateral neurons.</text>
</comment>
<comment type="developmental stage">
    <text evidence="5">Developmental protein. Present as a maternal component before zygotic transcription begins. Detected in animal, marginal and vegetal regions in late blastula and gastrula embryos. Later expressed in the neural tube, in the medial intermediate, and later neurons. Detected in the eyes at stage 25 until stage 28. At stage 35 not detected in the eyes but in the otic vesicles.</text>
</comment>
<comment type="PTM">
    <text evidence="6">A soluble form may be derived from the membrane form by proteolytic processing.</text>
</comment>
<comment type="similarity">
    <text evidence="6">Belongs to the glycosyltransferase 31 family.</text>
</comment>
<sequence>MLKNWGKKLLLSIVGATLTCLLVLVVDQQSRHMLETQSDHEPGSAAAVHLRADLDPANPGDGGDPANSAQDSGTFSAYFNKLTRVRRDVEQVAAPSKDSAAPEEDITANDVFIAVKTTKKFHRSRMDLLMDTWISRNKEQTFIFTDGEDEELQKKTGNVISTNCSAAHSRQALSCKMAVEYDKFIESDKKWFCHVDDDNYVNVRTLVKLLSRYSHTNDIYIGKPSLDRPIQATERISESNMRPVNFWFATGGAGFCISRGLALKMSPWASGGHFMNTAEKIRLPDDCTIGYIIESVLGVKLIRSNLFHSHLENLHQVPQSEIHNQVTLSYGMFENKRNAILMKGAFSVEEDPSRFRSVHCLLYPDTPWCPWKAAY</sequence>
<keyword id="KW-0217">Developmental protein</keyword>
<keyword id="KW-1015">Disulfide bond</keyword>
<keyword id="KW-0325">Glycoprotein</keyword>
<keyword id="KW-0328">Glycosyltransferase</keyword>
<keyword id="KW-0333">Golgi apparatus</keyword>
<keyword id="KW-0464">Manganese</keyword>
<keyword id="KW-0472">Membrane</keyword>
<keyword id="KW-0479">Metal-binding</keyword>
<keyword id="KW-1185">Reference proteome</keyword>
<keyword id="KW-0735">Signal-anchor</keyword>
<keyword id="KW-0808">Transferase</keyword>
<keyword id="KW-0812">Transmembrane</keyword>
<keyword id="KW-1133">Transmembrane helix</keyword>